<reference key="1">
    <citation type="submission" date="2006-08" db="EMBL/GenBank/DDBJ databases">
        <title>Complete sequence of chromosome 1 of Burkholderia cenocepacia HI2424.</title>
        <authorList>
            <person name="Copeland A."/>
            <person name="Lucas S."/>
            <person name="Lapidus A."/>
            <person name="Barry K."/>
            <person name="Detter J.C."/>
            <person name="Glavina del Rio T."/>
            <person name="Hammon N."/>
            <person name="Israni S."/>
            <person name="Pitluck S."/>
            <person name="Chain P."/>
            <person name="Malfatti S."/>
            <person name="Shin M."/>
            <person name="Vergez L."/>
            <person name="Schmutz J."/>
            <person name="Larimer F."/>
            <person name="Land M."/>
            <person name="Hauser L."/>
            <person name="Kyrpides N."/>
            <person name="Kim E."/>
            <person name="LiPuma J.J."/>
            <person name="Gonzalez C.F."/>
            <person name="Konstantinidis K."/>
            <person name="Tiedje J.M."/>
            <person name="Richardson P."/>
        </authorList>
    </citation>
    <scope>NUCLEOTIDE SEQUENCE [LARGE SCALE GENOMIC DNA]</scope>
    <source>
        <strain>HI2424</strain>
    </source>
</reference>
<comment type="function">
    <text evidence="1">Promotes RNA polymerase assembly. Latches the N- and C-terminal regions of the beta' subunit thereby facilitating its interaction with the beta and alpha subunits.</text>
</comment>
<comment type="catalytic activity">
    <reaction evidence="1">
        <text>RNA(n) + a ribonucleoside 5'-triphosphate = RNA(n+1) + diphosphate</text>
        <dbReference type="Rhea" id="RHEA:21248"/>
        <dbReference type="Rhea" id="RHEA-COMP:14527"/>
        <dbReference type="Rhea" id="RHEA-COMP:17342"/>
        <dbReference type="ChEBI" id="CHEBI:33019"/>
        <dbReference type="ChEBI" id="CHEBI:61557"/>
        <dbReference type="ChEBI" id="CHEBI:140395"/>
        <dbReference type="EC" id="2.7.7.6"/>
    </reaction>
</comment>
<comment type="subunit">
    <text evidence="1">The RNAP catalytic core consists of 2 alpha, 1 beta, 1 beta' and 1 omega subunit. When a sigma factor is associated with the core the holoenzyme is formed, which can initiate transcription.</text>
</comment>
<comment type="similarity">
    <text evidence="1">Belongs to the RNA polymerase subunit omega family.</text>
</comment>
<sequence>MARITVEDCLKQIPNRFELALAATYRARQLAQGHTPKIESRDKPTVVALREIAAGQVGVEMLKKVPV</sequence>
<name>RPOZ_BURCH</name>
<feature type="chain" id="PRO_1000005897" description="DNA-directed RNA polymerase subunit omega">
    <location>
        <begin position="1"/>
        <end position="67"/>
    </location>
</feature>
<protein>
    <recommendedName>
        <fullName evidence="1">DNA-directed RNA polymerase subunit omega</fullName>
        <shortName evidence="1">RNAP omega subunit</shortName>
        <ecNumber evidence="1">2.7.7.6</ecNumber>
    </recommendedName>
    <alternativeName>
        <fullName evidence="1">RNA polymerase omega subunit</fullName>
    </alternativeName>
    <alternativeName>
        <fullName evidence="1">Transcriptase subunit omega</fullName>
    </alternativeName>
</protein>
<organism>
    <name type="scientific">Burkholderia cenocepacia (strain HI2424)</name>
    <dbReference type="NCBI Taxonomy" id="331272"/>
    <lineage>
        <taxon>Bacteria</taxon>
        <taxon>Pseudomonadati</taxon>
        <taxon>Pseudomonadota</taxon>
        <taxon>Betaproteobacteria</taxon>
        <taxon>Burkholderiales</taxon>
        <taxon>Burkholderiaceae</taxon>
        <taxon>Burkholderia</taxon>
        <taxon>Burkholderia cepacia complex</taxon>
    </lineage>
</organism>
<gene>
    <name evidence="1" type="primary">rpoZ</name>
    <name type="ordered locus">Bcen2424_1000</name>
</gene>
<accession>A0K5H6</accession>
<keyword id="KW-0240">DNA-directed RNA polymerase</keyword>
<keyword id="KW-0548">Nucleotidyltransferase</keyword>
<keyword id="KW-0804">Transcription</keyword>
<keyword id="KW-0808">Transferase</keyword>
<proteinExistence type="inferred from homology"/>
<dbReference type="EC" id="2.7.7.6" evidence="1"/>
<dbReference type="EMBL" id="CP000458">
    <property type="protein sequence ID" value="ABK07753.1"/>
    <property type="molecule type" value="Genomic_DNA"/>
</dbReference>
<dbReference type="RefSeq" id="WP_006025620.1">
    <property type="nucleotide sequence ID" value="NC_008542.1"/>
</dbReference>
<dbReference type="SMR" id="A0K5H6"/>
<dbReference type="GeneID" id="98102617"/>
<dbReference type="KEGG" id="bch:Bcen2424_1000"/>
<dbReference type="HOGENOM" id="CLU_125406_5_2_4"/>
<dbReference type="GO" id="GO:0000428">
    <property type="term" value="C:DNA-directed RNA polymerase complex"/>
    <property type="evidence" value="ECO:0007669"/>
    <property type="project" value="UniProtKB-KW"/>
</dbReference>
<dbReference type="GO" id="GO:0003677">
    <property type="term" value="F:DNA binding"/>
    <property type="evidence" value="ECO:0007669"/>
    <property type="project" value="UniProtKB-UniRule"/>
</dbReference>
<dbReference type="GO" id="GO:0003899">
    <property type="term" value="F:DNA-directed RNA polymerase activity"/>
    <property type="evidence" value="ECO:0007669"/>
    <property type="project" value="UniProtKB-UniRule"/>
</dbReference>
<dbReference type="GO" id="GO:0006351">
    <property type="term" value="P:DNA-templated transcription"/>
    <property type="evidence" value="ECO:0007669"/>
    <property type="project" value="UniProtKB-UniRule"/>
</dbReference>
<dbReference type="Gene3D" id="3.90.940.10">
    <property type="match status" value="1"/>
</dbReference>
<dbReference type="HAMAP" id="MF_00366">
    <property type="entry name" value="RNApol_bact_RpoZ"/>
    <property type="match status" value="1"/>
</dbReference>
<dbReference type="InterPro" id="IPR003716">
    <property type="entry name" value="DNA-dir_RNA_pol_omega"/>
</dbReference>
<dbReference type="InterPro" id="IPR006110">
    <property type="entry name" value="Pol_omega/Rpo6/RPB6"/>
</dbReference>
<dbReference type="InterPro" id="IPR036161">
    <property type="entry name" value="RPB6/omega-like_sf"/>
</dbReference>
<dbReference type="NCBIfam" id="TIGR00690">
    <property type="entry name" value="rpoZ"/>
    <property type="match status" value="1"/>
</dbReference>
<dbReference type="PANTHER" id="PTHR34476">
    <property type="entry name" value="DNA-DIRECTED RNA POLYMERASE SUBUNIT OMEGA"/>
    <property type="match status" value="1"/>
</dbReference>
<dbReference type="PANTHER" id="PTHR34476:SF1">
    <property type="entry name" value="DNA-DIRECTED RNA POLYMERASE SUBUNIT OMEGA"/>
    <property type="match status" value="1"/>
</dbReference>
<dbReference type="Pfam" id="PF01192">
    <property type="entry name" value="RNA_pol_Rpb6"/>
    <property type="match status" value="1"/>
</dbReference>
<dbReference type="SMART" id="SM01409">
    <property type="entry name" value="RNA_pol_Rpb6"/>
    <property type="match status" value="1"/>
</dbReference>
<dbReference type="SUPFAM" id="SSF63562">
    <property type="entry name" value="RPB6/omega subunit-like"/>
    <property type="match status" value="1"/>
</dbReference>
<evidence type="ECO:0000255" key="1">
    <source>
        <dbReference type="HAMAP-Rule" id="MF_00366"/>
    </source>
</evidence>